<organism>
    <name type="scientific">Saccharomyces cerevisiae (strain ATCC 204508 / S288c)</name>
    <name type="common">Baker's yeast</name>
    <dbReference type="NCBI Taxonomy" id="559292"/>
    <lineage>
        <taxon>Eukaryota</taxon>
        <taxon>Fungi</taxon>
        <taxon>Dikarya</taxon>
        <taxon>Ascomycota</taxon>
        <taxon>Saccharomycotina</taxon>
        <taxon>Saccharomycetes</taxon>
        <taxon>Saccharomycetales</taxon>
        <taxon>Saccharomycetaceae</taxon>
        <taxon>Saccharomyces</taxon>
    </lineage>
</organism>
<proteinExistence type="predicted"/>
<reference key="1">
    <citation type="journal article" date="1995" name="Nat. Genet.">
        <title>Analysis of the nucleotide sequence of chromosome VI from Saccharomyces cerevisiae.</title>
        <authorList>
            <person name="Murakami Y."/>
            <person name="Naitou M."/>
            <person name="Hagiwara H."/>
            <person name="Shibata T."/>
            <person name="Ozawa M."/>
            <person name="Sasanuma S."/>
            <person name="Sasanuma M."/>
            <person name="Tsuchiya Y."/>
            <person name="Soeda E."/>
            <person name="Yokoyama K."/>
            <person name="Yamazaki M."/>
            <person name="Tashiro H."/>
            <person name="Eki T."/>
        </authorList>
    </citation>
    <scope>NUCLEOTIDE SEQUENCE [LARGE SCALE GENOMIC DNA]</scope>
    <source>
        <strain>ATCC 204508 / S288c</strain>
    </source>
</reference>
<reference key="2">
    <citation type="journal article" date="2014" name="G3 (Bethesda)">
        <title>The reference genome sequence of Saccharomyces cerevisiae: Then and now.</title>
        <authorList>
            <person name="Engel S.R."/>
            <person name="Dietrich F.S."/>
            <person name="Fisk D.G."/>
            <person name="Binkley G."/>
            <person name="Balakrishnan R."/>
            <person name="Costanzo M.C."/>
            <person name="Dwight S.S."/>
            <person name="Hitz B.C."/>
            <person name="Karra K."/>
            <person name="Nash R.S."/>
            <person name="Weng S."/>
            <person name="Wong E.D."/>
            <person name="Lloyd P."/>
            <person name="Skrzypek M.S."/>
            <person name="Miyasato S.R."/>
            <person name="Simison M."/>
            <person name="Cherry J.M."/>
        </authorList>
    </citation>
    <scope>GENOME REANNOTATION</scope>
    <source>
        <strain>ATCC 204508 / S288c</strain>
    </source>
</reference>
<reference key="3">
    <citation type="submission" date="1994-09" db="EMBL/GenBank/DDBJ databases">
        <authorList>
            <person name="Barrell B.G."/>
            <person name="Churcher C."/>
            <person name="Rajandream M.A."/>
        </authorList>
    </citation>
    <scope>NUCLEOTIDE SEQUENCE [GENOMIC DNA]</scope>
    <source>
        <strain>ATCC 204511 / S288c / AB972</strain>
    </source>
</reference>
<reference key="4">
    <citation type="journal article" date="2007" name="Genome Res.">
        <title>Approaching a complete repository of sequence-verified protein-encoding clones for Saccharomyces cerevisiae.</title>
        <authorList>
            <person name="Hu Y."/>
            <person name="Rolfs A."/>
            <person name="Bhullar B."/>
            <person name="Murthy T.V.S."/>
            <person name="Zhu C."/>
            <person name="Berger M.F."/>
            <person name="Camargo A.A."/>
            <person name="Kelley F."/>
            <person name="McCarron S."/>
            <person name="Jepson D."/>
            <person name="Richardson A."/>
            <person name="Raphael J."/>
            <person name="Moreira D."/>
            <person name="Taycher E."/>
            <person name="Zuo D."/>
            <person name="Mohr S."/>
            <person name="Kane M.F."/>
            <person name="Williamson J."/>
            <person name="Simpson A.J.G."/>
            <person name="Bulyk M.L."/>
            <person name="Harlow E."/>
            <person name="Marsischky G."/>
            <person name="Kolodner R.D."/>
            <person name="LaBaer J."/>
        </authorList>
    </citation>
    <scope>NUCLEOTIDE SEQUENCE [GENOMIC DNA]</scope>
    <source>
        <strain>ATCC 204508 / S288c</strain>
    </source>
</reference>
<name>YFB5_YEAST</name>
<sequence length="164" mass="19301">MLAYTFPSFNFYVNGFFSFLFLFLFLFPSLLRFYVILCRPLQVATYPLNRCQQYSSLAIFTASGFWLLVLVPRAKGPSTRRHCYRQLAPTHHRPFFSIFGWAVSGIRPLPEIFTWICASPFFLHSLTPPTFSHFSVYQEEKKEKRRTPKNTEQEGNRMCIWMSG</sequence>
<evidence type="ECO:0000255" key="1"/>
<evidence type="ECO:0000305" key="2"/>
<keyword id="KW-0472">Membrane</keyword>
<keyword id="KW-1185">Reference proteome</keyword>
<keyword id="KW-0812">Transmembrane</keyword>
<keyword id="KW-1133">Transmembrane helix</keyword>
<comment type="subcellular location">
    <subcellularLocation>
        <location evidence="2">Membrane</location>
        <topology evidence="2">Multi-pass membrane protein</topology>
    </subcellularLocation>
</comment>
<gene>
    <name type="ordered locus">YFL015C</name>
</gene>
<protein>
    <recommendedName>
        <fullName>Uncharacterized protein YFL015C</fullName>
    </recommendedName>
</protein>
<accession>P43578</accession>
<accession>A0A1S0T073</accession>
<feature type="chain" id="PRO_0000202678" description="Uncharacterized protein YFL015C">
    <location>
        <begin position="1"/>
        <end position="164"/>
    </location>
</feature>
<feature type="transmembrane region" description="Helical" evidence="1">
    <location>
        <begin position="11"/>
        <end position="31"/>
    </location>
</feature>
<feature type="transmembrane region" description="Helical" evidence="1">
    <location>
        <begin position="51"/>
        <end position="71"/>
    </location>
</feature>
<dbReference type="EMBL" id="D50617">
    <property type="protein sequence ID" value="BAA09223.1"/>
    <property type="molecule type" value="Genomic_DNA"/>
</dbReference>
<dbReference type="EMBL" id="Z46255">
    <property type="protein sequence ID" value="CAA86350.1"/>
    <property type="molecule type" value="Genomic_DNA"/>
</dbReference>
<dbReference type="EMBL" id="AY558465">
    <property type="protein sequence ID" value="AAS56791.1"/>
    <property type="molecule type" value="Genomic_DNA"/>
</dbReference>
<dbReference type="EMBL" id="BK006940">
    <property type="protein sequence ID" value="DAA80293.1"/>
    <property type="molecule type" value="Genomic_DNA"/>
</dbReference>
<dbReference type="PIR" id="S48319">
    <property type="entry name" value="S48319"/>
</dbReference>
<dbReference type="RefSeq" id="NP_001335773.1">
    <property type="nucleotide sequence ID" value="NM_001348832.1"/>
</dbReference>
<dbReference type="DIP" id="DIP-5235N"/>
<dbReference type="FunCoup" id="P43578">
    <property type="interactions" value="37"/>
</dbReference>
<dbReference type="IntAct" id="P43578">
    <property type="interactions" value="1"/>
</dbReference>
<dbReference type="PaxDb" id="4932-YFL015C"/>
<dbReference type="EnsemblFungi" id="YFL015C_mRNA">
    <property type="protein sequence ID" value="YFL015C"/>
    <property type="gene ID" value="YFL015C"/>
</dbReference>
<dbReference type="GeneID" id="850531"/>
<dbReference type="AGR" id="SGD:S000001879"/>
<dbReference type="SGD" id="S000001879">
    <property type="gene designation" value="YFL015C"/>
</dbReference>
<dbReference type="HOGENOM" id="CLU_1751127_0_0_1"/>
<dbReference type="InParanoid" id="P43578"/>
<dbReference type="OrthoDB" id="10311621at2759"/>
<dbReference type="PRO" id="PR:P43578"/>
<dbReference type="Proteomes" id="UP000002311">
    <property type="component" value="Chromosome VI"/>
</dbReference>
<dbReference type="RNAct" id="P43578">
    <property type="molecule type" value="protein"/>
</dbReference>
<dbReference type="GO" id="GO:0016020">
    <property type="term" value="C:membrane"/>
    <property type="evidence" value="ECO:0007669"/>
    <property type="project" value="UniProtKB-SubCell"/>
</dbReference>